<organism>
    <name type="scientific">Escherichia coli (strain K12 / MC4100 / BW2952)</name>
    <dbReference type="NCBI Taxonomy" id="595496"/>
    <lineage>
        <taxon>Bacteria</taxon>
        <taxon>Pseudomonadati</taxon>
        <taxon>Pseudomonadota</taxon>
        <taxon>Gammaproteobacteria</taxon>
        <taxon>Enterobacterales</taxon>
        <taxon>Enterobacteriaceae</taxon>
        <taxon>Escherichia</taxon>
    </lineage>
</organism>
<accession>C4ZXS1</accession>
<evidence type="ECO:0000255" key="1">
    <source>
        <dbReference type="HAMAP-Rule" id="MF_00567"/>
    </source>
</evidence>
<name>NADA_ECOBW</name>
<gene>
    <name evidence="1" type="primary">nadA</name>
    <name type="ordered locus">BWG_0602</name>
</gene>
<dbReference type="EC" id="2.5.1.72" evidence="1"/>
<dbReference type="EMBL" id="CP001396">
    <property type="protein sequence ID" value="ACR65397.1"/>
    <property type="molecule type" value="Genomic_DNA"/>
</dbReference>
<dbReference type="RefSeq" id="WP_000115290.1">
    <property type="nucleotide sequence ID" value="NC_012759.1"/>
</dbReference>
<dbReference type="SMR" id="C4ZXS1"/>
<dbReference type="KEGG" id="ebw:BWG_0602"/>
<dbReference type="HOGENOM" id="CLU_047382_1_0_6"/>
<dbReference type="UniPathway" id="UPA00253">
    <property type="reaction ID" value="UER00327"/>
</dbReference>
<dbReference type="GO" id="GO:0005829">
    <property type="term" value="C:cytosol"/>
    <property type="evidence" value="ECO:0007669"/>
    <property type="project" value="TreeGrafter"/>
</dbReference>
<dbReference type="GO" id="GO:0051539">
    <property type="term" value="F:4 iron, 4 sulfur cluster binding"/>
    <property type="evidence" value="ECO:0007669"/>
    <property type="project" value="UniProtKB-KW"/>
</dbReference>
<dbReference type="GO" id="GO:0046872">
    <property type="term" value="F:metal ion binding"/>
    <property type="evidence" value="ECO:0007669"/>
    <property type="project" value="UniProtKB-KW"/>
</dbReference>
<dbReference type="GO" id="GO:0008987">
    <property type="term" value="F:quinolinate synthetase A activity"/>
    <property type="evidence" value="ECO:0007669"/>
    <property type="project" value="UniProtKB-UniRule"/>
</dbReference>
<dbReference type="GO" id="GO:0034628">
    <property type="term" value="P:'de novo' NAD biosynthetic process from L-aspartate"/>
    <property type="evidence" value="ECO:0007669"/>
    <property type="project" value="TreeGrafter"/>
</dbReference>
<dbReference type="FunFam" id="3.40.50.10800:FF:000001">
    <property type="entry name" value="Quinolinate synthase A"/>
    <property type="match status" value="1"/>
</dbReference>
<dbReference type="FunFam" id="3.40.50.10800:FF:000003">
    <property type="entry name" value="Quinolinate synthase A"/>
    <property type="match status" value="1"/>
</dbReference>
<dbReference type="Gene3D" id="3.40.50.10800">
    <property type="entry name" value="NadA-like"/>
    <property type="match status" value="3"/>
</dbReference>
<dbReference type="HAMAP" id="MF_00567">
    <property type="entry name" value="NadA_type1"/>
    <property type="match status" value="1"/>
</dbReference>
<dbReference type="InterPro" id="IPR003473">
    <property type="entry name" value="NadA"/>
</dbReference>
<dbReference type="InterPro" id="IPR036094">
    <property type="entry name" value="NadA_sf"/>
</dbReference>
<dbReference type="InterPro" id="IPR023513">
    <property type="entry name" value="Quinolinate_synth_A_type1"/>
</dbReference>
<dbReference type="NCBIfam" id="TIGR00550">
    <property type="entry name" value="nadA"/>
    <property type="match status" value="1"/>
</dbReference>
<dbReference type="NCBIfam" id="NF006877">
    <property type="entry name" value="PRK09375.1-1"/>
    <property type="match status" value="1"/>
</dbReference>
<dbReference type="NCBIfam" id="NF006878">
    <property type="entry name" value="PRK09375.1-2"/>
    <property type="match status" value="1"/>
</dbReference>
<dbReference type="PANTHER" id="PTHR30573:SF0">
    <property type="entry name" value="QUINOLINATE SYNTHASE, CHLOROPLASTIC"/>
    <property type="match status" value="1"/>
</dbReference>
<dbReference type="PANTHER" id="PTHR30573">
    <property type="entry name" value="QUINOLINATE SYNTHETASE A"/>
    <property type="match status" value="1"/>
</dbReference>
<dbReference type="Pfam" id="PF02445">
    <property type="entry name" value="NadA"/>
    <property type="match status" value="1"/>
</dbReference>
<dbReference type="SUPFAM" id="SSF142754">
    <property type="entry name" value="NadA-like"/>
    <property type="match status" value="1"/>
</dbReference>
<keyword id="KW-0004">4Fe-4S</keyword>
<keyword id="KW-0963">Cytoplasm</keyword>
<keyword id="KW-0408">Iron</keyword>
<keyword id="KW-0411">Iron-sulfur</keyword>
<keyword id="KW-0479">Metal-binding</keyword>
<keyword id="KW-0662">Pyridine nucleotide biosynthesis</keyword>
<keyword id="KW-0808">Transferase</keyword>
<sequence length="347" mass="38241">MSVMFDPDTAIYPFPPKPTPLSIDEKAYYREKIKRLLKERNAVMVAHYYTDPEIQQLAEETGGCISDSLEMARFGAKHPASTLLVAGVRFMGETAKILSPEKTILMPTLQAECSLDLGCPVEEFNAFCDAHPDRTVVVYANTSAAVKARADWVVTSSIAVELIDHLDSLGEKIIWAPDKHLGRYVQKQTGGDILCWQGACIVHDEFKTQALTRLQEEYPDAAILVHPESPQAIVDMADAVGSTSQLIAAAKTLPHQRLIVATDRGIFYKMQQAVPDKELLEAPTAGEGATCRSCAHCPWMAMNGLQAIAEALEQEGSNHEVHVDERLRERALVPLNRMLDFAATLRG</sequence>
<protein>
    <recommendedName>
        <fullName evidence="1">Quinolinate synthase</fullName>
        <ecNumber evidence="1">2.5.1.72</ecNumber>
    </recommendedName>
</protein>
<reference key="1">
    <citation type="journal article" date="2009" name="J. Bacteriol.">
        <title>Genomic sequencing reveals regulatory mutations and recombinational events in the widely used MC4100 lineage of Escherichia coli K-12.</title>
        <authorList>
            <person name="Ferenci T."/>
            <person name="Zhou Z."/>
            <person name="Betteridge T."/>
            <person name="Ren Y."/>
            <person name="Liu Y."/>
            <person name="Feng L."/>
            <person name="Reeves P.R."/>
            <person name="Wang L."/>
        </authorList>
    </citation>
    <scope>NUCLEOTIDE SEQUENCE [LARGE SCALE GENOMIC DNA]</scope>
    <source>
        <strain>K12 / MC4100 / BW2952</strain>
    </source>
</reference>
<comment type="function">
    <text evidence="1">Catalyzes the condensation of iminoaspartate with dihydroxyacetone phosphate to form quinolinate.</text>
</comment>
<comment type="catalytic activity">
    <reaction evidence="1">
        <text>iminosuccinate + dihydroxyacetone phosphate = quinolinate + phosphate + 2 H2O + H(+)</text>
        <dbReference type="Rhea" id="RHEA:25888"/>
        <dbReference type="ChEBI" id="CHEBI:15377"/>
        <dbReference type="ChEBI" id="CHEBI:15378"/>
        <dbReference type="ChEBI" id="CHEBI:29959"/>
        <dbReference type="ChEBI" id="CHEBI:43474"/>
        <dbReference type="ChEBI" id="CHEBI:57642"/>
        <dbReference type="ChEBI" id="CHEBI:77875"/>
        <dbReference type="EC" id="2.5.1.72"/>
    </reaction>
    <physiologicalReaction direction="left-to-right" evidence="1">
        <dbReference type="Rhea" id="RHEA:25889"/>
    </physiologicalReaction>
</comment>
<comment type="cofactor">
    <cofactor evidence="1">
        <name>[4Fe-4S] cluster</name>
        <dbReference type="ChEBI" id="CHEBI:49883"/>
    </cofactor>
    <text evidence="1">Binds 1 [4Fe-4S] cluster per subunit.</text>
</comment>
<comment type="pathway">
    <text evidence="1">Cofactor biosynthesis; NAD(+) biosynthesis; quinolinate from iminoaspartate: step 1/1.</text>
</comment>
<comment type="subcellular location">
    <subcellularLocation>
        <location evidence="1">Cytoplasm</location>
    </subcellularLocation>
</comment>
<comment type="similarity">
    <text evidence="1">Belongs to the quinolinate synthase family. Type 1 subfamily.</text>
</comment>
<feature type="chain" id="PRO_1000212075" description="Quinolinate synthase">
    <location>
        <begin position="1"/>
        <end position="347"/>
    </location>
</feature>
<feature type="binding site" evidence="1">
    <location>
        <position position="47"/>
    </location>
    <ligand>
        <name>iminosuccinate</name>
        <dbReference type="ChEBI" id="CHEBI:77875"/>
    </ligand>
</feature>
<feature type="binding site" evidence="1">
    <location>
        <position position="68"/>
    </location>
    <ligand>
        <name>iminosuccinate</name>
        <dbReference type="ChEBI" id="CHEBI:77875"/>
    </ligand>
</feature>
<feature type="binding site" evidence="1">
    <location>
        <position position="113"/>
    </location>
    <ligand>
        <name>[4Fe-4S] cluster</name>
        <dbReference type="ChEBI" id="CHEBI:49883"/>
    </ligand>
</feature>
<feature type="binding site" evidence="1">
    <location>
        <begin position="139"/>
        <end position="141"/>
    </location>
    <ligand>
        <name>iminosuccinate</name>
        <dbReference type="ChEBI" id="CHEBI:77875"/>
    </ligand>
</feature>
<feature type="binding site" evidence="1">
    <location>
        <position position="156"/>
    </location>
    <ligand>
        <name>iminosuccinate</name>
        <dbReference type="ChEBI" id="CHEBI:77875"/>
    </ligand>
</feature>
<feature type="binding site" evidence="1">
    <location>
        <position position="200"/>
    </location>
    <ligand>
        <name>[4Fe-4S] cluster</name>
        <dbReference type="ChEBI" id="CHEBI:49883"/>
    </ligand>
</feature>
<feature type="binding site" evidence="1">
    <location>
        <begin position="226"/>
        <end position="228"/>
    </location>
    <ligand>
        <name>iminosuccinate</name>
        <dbReference type="ChEBI" id="CHEBI:77875"/>
    </ligand>
</feature>
<feature type="binding site" evidence="1">
    <location>
        <position position="243"/>
    </location>
    <ligand>
        <name>iminosuccinate</name>
        <dbReference type="ChEBI" id="CHEBI:77875"/>
    </ligand>
</feature>
<feature type="binding site" evidence="1">
    <location>
        <position position="297"/>
    </location>
    <ligand>
        <name>[4Fe-4S] cluster</name>
        <dbReference type="ChEBI" id="CHEBI:49883"/>
    </ligand>
</feature>
<proteinExistence type="inferred from homology"/>